<name>ERA_UREP2</name>
<proteinExistence type="inferred from homology"/>
<reference key="1">
    <citation type="submission" date="2008-02" db="EMBL/GenBank/DDBJ databases">
        <title>Genome sequence of Ureaplasma parvum serovar 3.</title>
        <authorList>
            <person name="Methe B.A."/>
            <person name="Glass J."/>
            <person name="Waites K."/>
            <person name="Shrivastava S."/>
        </authorList>
    </citation>
    <scope>NUCLEOTIDE SEQUENCE [LARGE SCALE GENOMIC DNA]</scope>
    <source>
        <strain>ATCC 27815 / 27 / NCTC 11736</strain>
    </source>
</reference>
<comment type="function">
    <text evidence="1">An essential GTPase that binds both GDP and GTP, with rapid nucleotide exchange. Plays a role in 16S rRNA processing and 30S ribosomal subunit biogenesis and possibly also in cell cycle regulation and energy metabolism.</text>
</comment>
<comment type="subunit">
    <text evidence="1">Monomer.</text>
</comment>
<comment type="subcellular location">
    <subcellularLocation>
        <location>Cytoplasm</location>
    </subcellularLocation>
    <subcellularLocation>
        <location evidence="1">Cell membrane</location>
        <topology evidence="1">Peripheral membrane protein</topology>
    </subcellularLocation>
</comment>
<comment type="similarity">
    <text evidence="1 2">Belongs to the TRAFAC class TrmE-Era-EngA-EngB-Septin-like GTPase superfamily. Era GTPase family.</text>
</comment>
<accession>B1AJD1</accession>
<protein>
    <recommendedName>
        <fullName evidence="1">GTPase Era</fullName>
    </recommendedName>
</protein>
<sequence length="300" mass="34552">MIKKYGIVAIVGKPNVGKSTLINAIMKKKVSIISNKPQTTRNAVKEIYEDDESAIIFTDTPGFHEPSNKLDLFLNHEIEISYKEANVILFVTTMDKELDANDFEIINLIKEANKENIILVISKAEMAKNQDQIDERIHFLKKHIAFKDVVQISALHVINIDKLINTIKNYLHKDVVTDYFRQKAEKEDKFVITEIIREQCLLNLNHEVPHGVGVEIDESKYNQEANHWIIKASIIIEKNSHKPIIIGQNGTMIKKISMGARKQLHEIYDCHISLTIFVKVENNWRDNNNIIKSLGYKIKK</sequence>
<gene>
    <name evidence="1" type="primary">era</name>
    <name type="ordered locus">UPA3_0509</name>
</gene>
<feature type="chain" id="PRO_1000079767" description="GTPase Era">
    <location>
        <begin position="1"/>
        <end position="300"/>
    </location>
</feature>
<feature type="domain" description="Era-type G" evidence="2">
    <location>
        <begin position="4"/>
        <end position="173"/>
    </location>
</feature>
<feature type="domain" description="KH type-2" evidence="1">
    <location>
        <begin position="204"/>
        <end position="282"/>
    </location>
</feature>
<feature type="region of interest" description="G1" evidence="2">
    <location>
        <begin position="12"/>
        <end position="19"/>
    </location>
</feature>
<feature type="region of interest" description="G2" evidence="2">
    <location>
        <begin position="38"/>
        <end position="42"/>
    </location>
</feature>
<feature type="region of interest" description="G3" evidence="2">
    <location>
        <begin position="59"/>
        <end position="62"/>
    </location>
</feature>
<feature type="region of interest" description="G4" evidence="2">
    <location>
        <begin position="122"/>
        <end position="125"/>
    </location>
</feature>
<feature type="region of interest" description="G5" evidence="2">
    <location>
        <begin position="152"/>
        <end position="154"/>
    </location>
</feature>
<feature type="binding site" evidence="1">
    <location>
        <begin position="12"/>
        <end position="19"/>
    </location>
    <ligand>
        <name>GTP</name>
        <dbReference type="ChEBI" id="CHEBI:37565"/>
    </ligand>
</feature>
<feature type="binding site" evidence="1">
    <location>
        <begin position="59"/>
        <end position="63"/>
    </location>
    <ligand>
        <name>GTP</name>
        <dbReference type="ChEBI" id="CHEBI:37565"/>
    </ligand>
</feature>
<feature type="binding site" evidence="1">
    <location>
        <begin position="122"/>
        <end position="125"/>
    </location>
    <ligand>
        <name>GTP</name>
        <dbReference type="ChEBI" id="CHEBI:37565"/>
    </ligand>
</feature>
<organism>
    <name type="scientific">Ureaplasma parvum serovar 3 (strain ATCC 27815 / 27 / NCTC 11736)</name>
    <dbReference type="NCBI Taxonomy" id="505682"/>
    <lineage>
        <taxon>Bacteria</taxon>
        <taxon>Bacillati</taxon>
        <taxon>Mycoplasmatota</taxon>
        <taxon>Mycoplasmoidales</taxon>
        <taxon>Mycoplasmoidaceae</taxon>
        <taxon>Ureaplasma</taxon>
    </lineage>
</organism>
<keyword id="KW-1003">Cell membrane</keyword>
<keyword id="KW-0963">Cytoplasm</keyword>
<keyword id="KW-0342">GTP-binding</keyword>
<keyword id="KW-0472">Membrane</keyword>
<keyword id="KW-0547">Nucleotide-binding</keyword>
<keyword id="KW-0690">Ribosome biogenesis</keyword>
<keyword id="KW-0694">RNA-binding</keyword>
<keyword id="KW-0699">rRNA-binding</keyword>
<evidence type="ECO:0000255" key="1">
    <source>
        <dbReference type="HAMAP-Rule" id="MF_00367"/>
    </source>
</evidence>
<evidence type="ECO:0000255" key="2">
    <source>
        <dbReference type="PROSITE-ProRule" id="PRU01050"/>
    </source>
</evidence>
<dbReference type="EMBL" id="CP000942">
    <property type="protein sequence ID" value="ACA33132.1"/>
    <property type="molecule type" value="Genomic_DNA"/>
</dbReference>
<dbReference type="RefSeq" id="WP_006688444.1">
    <property type="nucleotide sequence ID" value="NC_010503.1"/>
</dbReference>
<dbReference type="SMR" id="B1AJD1"/>
<dbReference type="GeneID" id="29672538"/>
<dbReference type="KEGG" id="upa:UPA3_0509"/>
<dbReference type="HOGENOM" id="CLU_038009_1_0_14"/>
<dbReference type="Proteomes" id="UP000002162">
    <property type="component" value="Chromosome"/>
</dbReference>
<dbReference type="GO" id="GO:0005829">
    <property type="term" value="C:cytosol"/>
    <property type="evidence" value="ECO:0007669"/>
    <property type="project" value="TreeGrafter"/>
</dbReference>
<dbReference type="GO" id="GO:0005886">
    <property type="term" value="C:plasma membrane"/>
    <property type="evidence" value="ECO:0007669"/>
    <property type="project" value="UniProtKB-SubCell"/>
</dbReference>
<dbReference type="GO" id="GO:0005525">
    <property type="term" value="F:GTP binding"/>
    <property type="evidence" value="ECO:0007669"/>
    <property type="project" value="UniProtKB-UniRule"/>
</dbReference>
<dbReference type="GO" id="GO:0003924">
    <property type="term" value="F:GTPase activity"/>
    <property type="evidence" value="ECO:0007669"/>
    <property type="project" value="UniProtKB-UniRule"/>
</dbReference>
<dbReference type="GO" id="GO:0043024">
    <property type="term" value="F:ribosomal small subunit binding"/>
    <property type="evidence" value="ECO:0007669"/>
    <property type="project" value="TreeGrafter"/>
</dbReference>
<dbReference type="GO" id="GO:0070181">
    <property type="term" value="F:small ribosomal subunit rRNA binding"/>
    <property type="evidence" value="ECO:0007669"/>
    <property type="project" value="UniProtKB-UniRule"/>
</dbReference>
<dbReference type="GO" id="GO:0000028">
    <property type="term" value="P:ribosomal small subunit assembly"/>
    <property type="evidence" value="ECO:0007669"/>
    <property type="project" value="TreeGrafter"/>
</dbReference>
<dbReference type="CDD" id="cd04163">
    <property type="entry name" value="Era"/>
    <property type="match status" value="1"/>
</dbReference>
<dbReference type="CDD" id="cd22534">
    <property type="entry name" value="KH-II_Era"/>
    <property type="match status" value="1"/>
</dbReference>
<dbReference type="Gene3D" id="3.30.300.20">
    <property type="match status" value="1"/>
</dbReference>
<dbReference type="Gene3D" id="3.40.50.300">
    <property type="entry name" value="P-loop containing nucleotide triphosphate hydrolases"/>
    <property type="match status" value="1"/>
</dbReference>
<dbReference type="HAMAP" id="MF_00367">
    <property type="entry name" value="GTPase_Era"/>
    <property type="match status" value="1"/>
</dbReference>
<dbReference type="InterPro" id="IPR030388">
    <property type="entry name" value="G_ERA_dom"/>
</dbReference>
<dbReference type="InterPro" id="IPR006073">
    <property type="entry name" value="GTP-bd"/>
</dbReference>
<dbReference type="InterPro" id="IPR005662">
    <property type="entry name" value="GTPase_Era-like"/>
</dbReference>
<dbReference type="InterPro" id="IPR015946">
    <property type="entry name" value="KH_dom-like_a/b"/>
</dbReference>
<dbReference type="InterPro" id="IPR004044">
    <property type="entry name" value="KH_dom_type_2"/>
</dbReference>
<dbReference type="InterPro" id="IPR009019">
    <property type="entry name" value="KH_sf_prok-type"/>
</dbReference>
<dbReference type="InterPro" id="IPR027417">
    <property type="entry name" value="P-loop_NTPase"/>
</dbReference>
<dbReference type="InterPro" id="IPR005225">
    <property type="entry name" value="Small_GTP-bd"/>
</dbReference>
<dbReference type="NCBIfam" id="TIGR00436">
    <property type="entry name" value="era"/>
    <property type="match status" value="1"/>
</dbReference>
<dbReference type="NCBIfam" id="NF000908">
    <property type="entry name" value="PRK00089.1"/>
    <property type="match status" value="1"/>
</dbReference>
<dbReference type="NCBIfam" id="TIGR00231">
    <property type="entry name" value="small_GTP"/>
    <property type="match status" value="1"/>
</dbReference>
<dbReference type="PANTHER" id="PTHR42698">
    <property type="entry name" value="GTPASE ERA"/>
    <property type="match status" value="1"/>
</dbReference>
<dbReference type="PANTHER" id="PTHR42698:SF1">
    <property type="entry name" value="GTPASE ERA, MITOCHONDRIAL"/>
    <property type="match status" value="1"/>
</dbReference>
<dbReference type="Pfam" id="PF07650">
    <property type="entry name" value="KH_2"/>
    <property type="match status" value="1"/>
</dbReference>
<dbReference type="Pfam" id="PF01926">
    <property type="entry name" value="MMR_HSR1"/>
    <property type="match status" value="1"/>
</dbReference>
<dbReference type="SUPFAM" id="SSF52540">
    <property type="entry name" value="P-loop containing nucleoside triphosphate hydrolases"/>
    <property type="match status" value="1"/>
</dbReference>
<dbReference type="SUPFAM" id="SSF54814">
    <property type="entry name" value="Prokaryotic type KH domain (KH-domain type II)"/>
    <property type="match status" value="1"/>
</dbReference>
<dbReference type="PROSITE" id="PS51713">
    <property type="entry name" value="G_ERA"/>
    <property type="match status" value="1"/>
</dbReference>
<dbReference type="PROSITE" id="PS50823">
    <property type="entry name" value="KH_TYPE_2"/>
    <property type="match status" value="1"/>
</dbReference>